<keyword id="KW-1185">Reference proteome</keyword>
<keyword id="KW-0687">Ribonucleoprotein</keyword>
<keyword id="KW-0689">Ribosomal protein</keyword>
<keyword id="KW-0694">RNA-binding</keyword>
<keyword id="KW-0699">rRNA-binding</keyword>
<sequence length="172" mass="18194">MAKIQPKVQGDERDDGLREKMIAVNRVTKVVKGGRILGFAALTVVGDGDGRIGMGKGKAKEVPVAVQKAMDEARRKMVKVPLKNGTLQHEVIGKHGAAKVLMAPAKEGTGVIAGGPMRAIFEVMGVTNIVTKSHGSTNPYNMVRATLDGLRKMSTPAEIAAKRGKSVEEILG</sequence>
<comment type="function">
    <text evidence="1">With S4 and S12 plays an important role in translational accuracy.</text>
</comment>
<comment type="function">
    <text evidence="1">Located at the back of the 30S subunit body where it stabilizes the conformation of the head with respect to the body.</text>
</comment>
<comment type="subunit">
    <text evidence="1">Part of the 30S ribosomal subunit. Contacts proteins S4 and S8.</text>
</comment>
<comment type="domain">
    <text>The N-terminal domain interacts with the head of the 30S subunit; the C-terminal domain interacts with the body and contacts protein S4. The interaction surface between S4 and S5 is involved in control of translational fidelity.</text>
</comment>
<comment type="similarity">
    <text evidence="1">Belongs to the universal ribosomal protein uS5 family.</text>
</comment>
<gene>
    <name evidence="1" type="primary">rpsE</name>
    <name type="ordered locus">RSc3002</name>
    <name type="ORF">RS01088</name>
</gene>
<feature type="chain" id="PRO_0000131577" description="Small ribosomal subunit protein uS5">
    <location>
        <begin position="1"/>
        <end position="172"/>
    </location>
</feature>
<feature type="domain" description="S5 DRBM" evidence="1">
    <location>
        <begin position="17"/>
        <end position="80"/>
    </location>
</feature>
<organism>
    <name type="scientific">Ralstonia nicotianae (strain ATCC BAA-1114 / GMI1000)</name>
    <name type="common">Ralstonia solanacearum</name>
    <dbReference type="NCBI Taxonomy" id="267608"/>
    <lineage>
        <taxon>Bacteria</taxon>
        <taxon>Pseudomonadati</taxon>
        <taxon>Pseudomonadota</taxon>
        <taxon>Betaproteobacteria</taxon>
        <taxon>Burkholderiales</taxon>
        <taxon>Burkholderiaceae</taxon>
        <taxon>Ralstonia</taxon>
        <taxon>Ralstonia solanacearum species complex</taxon>
    </lineage>
</organism>
<accession>Q8XV29</accession>
<proteinExistence type="inferred from homology"/>
<evidence type="ECO:0000255" key="1">
    <source>
        <dbReference type="HAMAP-Rule" id="MF_01307"/>
    </source>
</evidence>
<evidence type="ECO:0000305" key="2"/>
<reference key="1">
    <citation type="journal article" date="2002" name="Nature">
        <title>Genome sequence of the plant pathogen Ralstonia solanacearum.</title>
        <authorList>
            <person name="Salanoubat M."/>
            <person name="Genin S."/>
            <person name="Artiguenave F."/>
            <person name="Gouzy J."/>
            <person name="Mangenot S."/>
            <person name="Arlat M."/>
            <person name="Billault A."/>
            <person name="Brottier P."/>
            <person name="Camus J.-C."/>
            <person name="Cattolico L."/>
            <person name="Chandler M."/>
            <person name="Choisne N."/>
            <person name="Claudel-Renard C."/>
            <person name="Cunnac S."/>
            <person name="Demange N."/>
            <person name="Gaspin C."/>
            <person name="Lavie M."/>
            <person name="Moisan A."/>
            <person name="Robert C."/>
            <person name="Saurin W."/>
            <person name="Schiex T."/>
            <person name="Siguier P."/>
            <person name="Thebault P."/>
            <person name="Whalen M."/>
            <person name="Wincker P."/>
            <person name="Levy M."/>
            <person name="Weissenbach J."/>
            <person name="Boucher C.A."/>
        </authorList>
    </citation>
    <scope>NUCLEOTIDE SEQUENCE [LARGE SCALE GENOMIC DNA]</scope>
    <source>
        <strain>ATCC BAA-1114 / GMI1000</strain>
    </source>
</reference>
<name>RS5_RALN1</name>
<dbReference type="EMBL" id="AL646052">
    <property type="protein sequence ID" value="CAD16711.1"/>
    <property type="molecule type" value="Genomic_DNA"/>
</dbReference>
<dbReference type="RefSeq" id="WP_011002906.1">
    <property type="nucleotide sequence ID" value="NC_003295.1"/>
</dbReference>
<dbReference type="SMR" id="Q8XV29"/>
<dbReference type="STRING" id="267608.RSc3002"/>
<dbReference type="EnsemblBacteria" id="CAD16711">
    <property type="protein sequence ID" value="CAD16711"/>
    <property type="gene ID" value="RSc3002"/>
</dbReference>
<dbReference type="GeneID" id="93851196"/>
<dbReference type="KEGG" id="rso:RSc3002"/>
<dbReference type="eggNOG" id="COG0098">
    <property type="taxonomic scope" value="Bacteria"/>
</dbReference>
<dbReference type="HOGENOM" id="CLU_065898_2_2_4"/>
<dbReference type="Proteomes" id="UP000001436">
    <property type="component" value="Chromosome"/>
</dbReference>
<dbReference type="GO" id="GO:0015935">
    <property type="term" value="C:small ribosomal subunit"/>
    <property type="evidence" value="ECO:0007669"/>
    <property type="project" value="InterPro"/>
</dbReference>
<dbReference type="GO" id="GO:0019843">
    <property type="term" value="F:rRNA binding"/>
    <property type="evidence" value="ECO:0007669"/>
    <property type="project" value="UniProtKB-UniRule"/>
</dbReference>
<dbReference type="GO" id="GO:0003735">
    <property type="term" value="F:structural constituent of ribosome"/>
    <property type="evidence" value="ECO:0007669"/>
    <property type="project" value="InterPro"/>
</dbReference>
<dbReference type="GO" id="GO:0006412">
    <property type="term" value="P:translation"/>
    <property type="evidence" value="ECO:0007669"/>
    <property type="project" value="UniProtKB-UniRule"/>
</dbReference>
<dbReference type="FunFam" id="3.30.160.20:FF:000001">
    <property type="entry name" value="30S ribosomal protein S5"/>
    <property type="match status" value="1"/>
</dbReference>
<dbReference type="FunFam" id="3.30.230.10:FF:000002">
    <property type="entry name" value="30S ribosomal protein S5"/>
    <property type="match status" value="1"/>
</dbReference>
<dbReference type="Gene3D" id="3.30.160.20">
    <property type="match status" value="1"/>
</dbReference>
<dbReference type="Gene3D" id="3.30.230.10">
    <property type="match status" value="1"/>
</dbReference>
<dbReference type="HAMAP" id="MF_01307_B">
    <property type="entry name" value="Ribosomal_uS5_B"/>
    <property type="match status" value="1"/>
</dbReference>
<dbReference type="InterPro" id="IPR020568">
    <property type="entry name" value="Ribosomal_Su5_D2-typ_SF"/>
</dbReference>
<dbReference type="InterPro" id="IPR000851">
    <property type="entry name" value="Ribosomal_uS5"/>
</dbReference>
<dbReference type="InterPro" id="IPR005712">
    <property type="entry name" value="Ribosomal_uS5_bac-type"/>
</dbReference>
<dbReference type="InterPro" id="IPR005324">
    <property type="entry name" value="Ribosomal_uS5_C"/>
</dbReference>
<dbReference type="InterPro" id="IPR013810">
    <property type="entry name" value="Ribosomal_uS5_N"/>
</dbReference>
<dbReference type="InterPro" id="IPR018192">
    <property type="entry name" value="Ribosomal_uS5_N_CS"/>
</dbReference>
<dbReference type="InterPro" id="IPR014721">
    <property type="entry name" value="Ribsml_uS5_D2-typ_fold_subgr"/>
</dbReference>
<dbReference type="NCBIfam" id="TIGR01021">
    <property type="entry name" value="rpsE_bact"/>
    <property type="match status" value="1"/>
</dbReference>
<dbReference type="PANTHER" id="PTHR48277">
    <property type="entry name" value="MITOCHONDRIAL RIBOSOMAL PROTEIN S5"/>
    <property type="match status" value="1"/>
</dbReference>
<dbReference type="PANTHER" id="PTHR48277:SF1">
    <property type="entry name" value="MITOCHONDRIAL RIBOSOMAL PROTEIN S5"/>
    <property type="match status" value="1"/>
</dbReference>
<dbReference type="Pfam" id="PF00333">
    <property type="entry name" value="Ribosomal_S5"/>
    <property type="match status" value="1"/>
</dbReference>
<dbReference type="Pfam" id="PF03719">
    <property type="entry name" value="Ribosomal_S5_C"/>
    <property type="match status" value="1"/>
</dbReference>
<dbReference type="SUPFAM" id="SSF54768">
    <property type="entry name" value="dsRNA-binding domain-like"/>
    <property type="match status" value="1"/>
</dbReference>
<dbReference type="SUPFAM" id="SSF54211">
    <property type="entry name" value="Ribosomal protein S5 domain 2-like"/>
    <property type="match status" value="1"/>
</dbReference>
<dbReference type="PROSITE" id="PS00585">
    <property type="entry name" value="RIBOSOMAL_S5"/>
    <property type="match status" value="1"/>
</dbReference>
<dbReference type="PROSITE" id="PS50881">
    <property type="entry name" value="S5_DSRBD"/>
    <property type="match status" value="1"/>
</dbReference>
<protein>
    <recommendedName>
        <fullName evidence="1">Small ribosomal subunit protein uS5</fullName>
    </recommendedName>
    <alternativeName>
        <fullName evidence="2">30S ribosomal protein S5</fullName>
    </alternativeName>
</protein>